<protein>
    <recommendedName>
        <fullName evidence="1">Probable 5-dehydro-4-deoxyglucarate dehydratase</fullName>
        <ecNumber evidence="1">4.2.1.41</ecNumber>
    </recommendedName>
    <alternativeName>
        <fullName evidence="1">5-keto-4-deoxy-glucarate dehydratase</fullName>
        <shortName evidence="1">KDGDH</shortName>
    </alternativeName>
</protein>
<keyword id="KW-0456">Lyase</keyword>
<sequence length="303" mass="32631">MNPQELKSILSHGLLSFPVTDFNAQGDFNPAGYIKRLEWLAPYGASALFAAGGTGEFFSLAASEYSQVIKTAVDTCATSVPILAGVGGSTRQAIEYAQEAERLGAKGLLLLPHYLTEASQDGVAAHVEAVCKSVNIGVVVYNRNVCRLNADLLEKLAERCPNLIGYKDGLGDIELMVSIRRRLGERFSYLGGLPTAEVYAAAYKALGVPVYSSAVFNFVPKTAMDFYNAIARDDHAAVAKLIDDFFLPYLDIRNRKAGYAVSIVKAGARIAGYDAGPVRTPLTDLTAEEYEMLAALMDKMGPQ</sequence>
<proteinExistence type="inferred from homology"/>
<comment type="catalytic activity">
    <reaction evidence="1">
        <text>5-dehydro-4-deoxy-D-glucarate + H(+) = 2,5-dioxopentanoate + CO2 + H2O</text>
        <dbReference type="Rhea" id="RHEA:24608"/>
        <dbReference type="ChEBI" id="CHEBI:15377"/>
        <dbReference type="ChEBI" id="CHEBI:15378"/>
        <dbReference type="ChEBI" id="CHEBI:16526"/>
        <dbReference type="ChEBI" id="CHEBI:42819"/>
        <dbReference type="ChEBI" id="CHEBI:58136"/>
        <dbReference type="EC" id="4.2.1.41"/>
    </reaction>
</comment>
<comment type="pathway">
    <text evidence="1">Carbohydrate acid metabolism; D-glucarate degradation; 2,5-dioxopentanoate from D-glucarate: step 2/2.</text>
</comment>
<comment type="similarity">
    <text evidence="1">Belongs to the DapA family.</text>
</comment>
<name>KDGD_PSEP1</name>
<feature type="chain" id="PRO_1000045409" description="Probable 5-dehydro-4-deoxyglucarate dehydratase">
    <location>
        <begin position="1"/>
        <end position="303"/>
    </location>
</feature>
<organism>
    <name type="scientific">Pseudomonas putida (strain ATCC 700007 / DSM 6899 / JCM 31910 / BCRC 17059 / LMG 24140 / F1)</name>
    <dbReference type="NCBI Taxonomy" id="351746"/>
    <lineage>
        <taxon>Bacteria</taxon>
        <taxon>Pseudomonadati</taxon>
        <taxon>Pseudomonadota</taxon>
        <taxon>Gammaproteobacteria</taxon>
        <taxon>Pseudomonadales</taxon>
        <taxon>Pseudomonadaceae</taxon>
        <taxon>Pseudomonas</taxon>
    </lineage>
</organism>
<reference key="1">
    <citation type="submission" date="2007-05" db="EMBL/GenBank/DDBJ databases">
        <title>Complete sequence of Pseudomonas putida F1.</title>
        <authorList>
            <consortium name="US DOE Joint Genome Institute"/>
            <person name="Copeland A."/>
            <person name="Lucas S."/>
            <person name="Lapidus A."/>
            <person name="Barry K."/>
            <person name="Detter J.C."/>
            <person name="Glavina del Rio T."/>
            <person name="Hammon N."/>
            <person name="Israni S."/>
            <person name="Dalin E."/>
            <person name="Tice H."/>
            <person name="Pitluck S."/>
            <person name="Chain P."/>
            <person name="Malfatti S."/>
            <person name="Shin M."/>
            <person name="Vergez L."/>
            <person name="Schmutz J."/>
            <person name="Larimer F."/>
            <person name="Land M."/>
            <person name="Hauser L."/>
            <person name="Kyrpides N."/>
            <person name="Lykidis A."/>
            <person name="Parales R."/>
            <person name="Richardson P."/>
        </authorList>
    </citation>
    <scope>NUCLEOTIDE SEQUENCE [LARGE SCALE GENOMIC DNA]</scope>
    <source>
        <strain>ATCC 700007 / DSM 6899 / JCM 31910 / BCRC 17059 / LMG 24140 / F1</strain>
    </source>
</reference>
<evidence type="ECO:0000255" key="1">
    <source>
        <dbReference type="HAMAP-Rule" id="MF_00694"/>
    </source>
</evidence>
<accession>A5W516</accession>
<gene>
    <name type="ordered locus">Pput_3098</name>
</gene>
<dbReference type="EC" id="4.2.1.41" evidence="1"/>
<dbReference type="EMBL" id="CP000712">
    <property type="protein sequence ID" value="ABQ79226.1"/>
    <property type="molecule type" value="Genomic_DNA"/>
</dbReference>
<dbReference type="SMR" id="A5W516"/>
<dbReference type="KEGG" id="ppf:Pput_3098"/>
<dbReference type="eggNOG" id="COG0329">
    <property type="taxonomic scope" value="Bacteria"/>
</dbReference>
<dbReference type="HOGENOM" id="CLU_049343_5_2_6"/>
<dbReference type="UniPathway" id="UPA00564">
    <property type="reaction ID" value="UER00628"/>
</dbReference>
<dbReference type="GO" id="GO:0008840">
    <property type="term" value="F:4-hydroxy-tetrahydrodipicolinate synthase activity"/>
    <property type="evidence" value="ECO:0007669"/>
    <property type="project" value="TreeGrafter"/>
</dbReference>
<dbReference type="GO" id="GO:0047448">
    <property type="term" value="F:5-dehydro-4-deoxyglucarate dehydratase activity"/>
    <property type="evidence" value="ECO:0007669"/>
    <property type="project" value="UniProtKB-UniRule"/>
</dbReference>
<dbReference type="GO" id="GO:0042838">
    <property type="term" value="P:D-glucarate catabolic process"/>
    <property type="evidence" value="ECO:0007669"/>
    <property type="project" value="UniProtKB-UniRule"/>
</dbReference>
<dbReference type="CDD" id="cd00951">
    <property type="entry name" value="KDGDH"/>
    <property type="match status" value="1"/>
</dbReference>
<dbReference type="Gene3D" id="3.20.20.70">
    <property type="entry name" value="Aldolase class I"/>
    <property type="match status" value="1"/>
</dbReference>
<dbReference type="HAMAP" id="MF_00694">
    <property type="entry name" value="KDGDH"/>
    <property type="match status" value="1"/>
</dbReference>
<dbReference type="InterPro" id="IPR013785">
    <property type="entry name" value="Aldolase_TIM"/>
</dbReference>
<dbReference type="InterPro" id="IPR002220">
    <property type="entry name" value="DapA-like"/>
</dbReference>
<dbReference type="InterPro" id="IPR017655">
    <property type="entry name" value="Dehydro-deoxyglucarate_dehyd"/>
</dbReference>
<dbReference type="NCBIfam" id="TIGR03249">
    <property type="entry name" value="KdgD"/>
    <property type="match status" value="1"/>
</dbReference>
<dbReference type="NCBIfam" id="NF002958">
    <property type="entry name" value="PRK03620.1"/>
    <property type="match status" value="1"/>
</dbReference>
<dbReference type="PANTHER" id="PTHR12128:SF19">
    <property type="entry name" value="5-DEHYDRO-4-DEOXYGLUCARATE DEHYDRATASE 2-RELATED"/>
    <property type="match status" value="1"/>
</dbReference>
<dbReference type="PANTHER" id="PTHR12128">
    <property type="entry name" value="DIHYDRODIPICOLINATE SYNTHASE"/>
    <property type="match status" value="1"/>
</dbReference>
<dbReference type="Pfam" id="PF00701">
    <property type="entry name" value="DHDPS"/>
    <property type="match status" value="1"/>
</dbReference>
<dbReference type="PIRSF" id="PIRSF001365">
    <property type="entry name" value="DHDPS"/>
    <property type="match status" value="1"/>
</dbReference>
<dbReference type="SMART" id="SM01130">
    <property type="entry name" value="DHDPS"/>
    <property type="match status" value="1"/>
</dbReference>
<dbReference type="SUPFAM" id="SSF51569">
    <property type="entry name" value="Aldolase"/>
    <property type="match status" value="1"/>
</dbReference>